<organism>
    <name type="scientific">Chlamydia pneumoniae</name>
    <name type="common">Chlamydophila pneumoniae</name>
    <dbReference type="NCBI Taxonomy" id="83558"/>
    <lineage>
        <taxon>Bacteria</taxon>
        <taxon>Pseudomonadati</taxon>
        <taxon>Chlamydiota</taxon>
        <taxon>Chlamydiia</taxon>
        <taxon>Chlamydiales</taxon>
        <taxon>Chlamydiaceae</taxon>
        <taxon>Chlamydia/Chlamydophila group</taxon>
        <taxon>Chlamydia</taxon>
    </lineage>
</organism>
<evidence type="ECO:0000255" key="1"/>
<evidence type="ECO:0000255" key="2">
    <source>
        <dbReference type="PROSITE-ProRule" id="PRU00217"/>
    </source>
</evidence>
<evidence type="ECO:0000255" key="3">
    <source>
        <dbReference type="PROSITE-ProRule" id="PRU01251"/>
    </source>
</evidence>
<evidence type="ECO:0000256" key="4">
    <source>
        <dbReference type="SAM" id="MobiDB-lite"/>
    </source>
</evidence>
<evidence type="ECO:0000305" key="5"/>
<keyword id="KW-0067">ATP-binding</keyword>
<keyword id="KW-0143">Chaperone</keyword>
<keyword id="KW-0547">Nucleotide-binding</keyword>
<keyword id="KW-0677">Repeat</keyword>
<comment type="similarity">
    <text evidence="5">Belongs to the ClpA/ClpB family. ClpC subfamily.</text>
</comment>
<accession>Q9Z8A6</accession>
<accession>Q9JSE9</accession>
<accession>Q9K297</accession>
<feature type="chain" id="PRO_0000191231" description="Probable ATP-dependent Clp protease ATP-binding subunit">
    <location>
        <begin position="1"/>
        <end position="845"/>
    </location>
</feature>
<feature type="domain" description="Clp R" evidence="3">
    <location>
        <begin position="2"/>
        <end position="145"/>
    </location>
</feature>
<feature type="domain" description="UVR" evidence="2">
    <location>
        <begin position="441"/>
        <end position="476"/>
    </location>
</feature>
<feature type="region of interest" description="Repeat 1" evidence="3">
    <location>
        <begin position="5"/>
        <end position="70"/>
    </location>
</feature>
<feature type="region of interest" description="Repeat 2" evidence="3">
    <location>
        <begin position="81"/>
        <end position="145"/>
    </location>
</feature>
<feature type="region of interest" description="Disordered" evidence="4">
    <location>
        <begin position="149"/>
        <end position="179"/>
    </location>
</feature>
<feature type="compositionally biased region" description="Low complexity" evidence="4">
    <location>
        <begin position="151"/>
        <end position="171"/>
    </location>
</feature>
<feature type="binding site" evidence="1">
    <location>
        <begin position="232"/>
        <end position="239"/>
    </location>
    <ligand>
        <name>ATP</name>
        <dbReference type="ChEBI" id="CHEBI:30616"/>
    </ligand>
</feature>
<feature type="binding site" evidence="1">
    <location>
        <begin position="569"/>
        <end position="576"/>
    </location>
    <ligand>
        <name>ATP</name>
        <dbReference type="ChEBI" id="CHEBI:30616"/>
    </ligand>
</feature>
<feature type="sequence conflict" description="In Ref. 3; BAA98645." evidence="5" ref="3">
    <original>K</original>
    <variation>T</variation>
    <location>
        <position position="4"/>
    </location>
</feature>
<feature type="sequence conflict" description="In Ref. 1; AAD18581." evidence="5" ref="1">
    <original>K</original>
    <variation>R</variation>
    <location>
        <position position="141"/>
    </location>
</feature>
<name>CLPC_CHLPN</name>
<gene>
    <name type="primary">clpC</name>
    <name type="ordered locus">CPn_0437</name>
    <name type="ordered locus">CP_0316</name>
    <name type="ordered locus">CpB0454</name>
</gene>
<sequence length="845" mass="94981">MFEKFTNRAKQVIKLAKKEAQRLNHNYLGTEHILLGLLKLGQGVAVNVLRNLGIDFDTARQEVERLIGYGPEIQVYGDPALTGRVKKSFESANEEASLLEHNYVGTEHLLLGILHQSDSVALQVLENLHIDPREVRKEILKELETFNLQLPPSSSSSSSSSRSNPSSSKSPLGHSLGSDKNEKLSALKAYGYDLTEMVRESKLDPVIGRSSEVERLILILCRRRKNNPVLIGEAGVGKTAIVEGLAQKIILNEVPDALRKKRLITLDLALMIAGTKYRGQFEERIKAVMDEVRKHGNILLFIDELHTIVGAGAAEGAIDASNILKPALARGEIQCIGATTIDEYRKHIEKDAALERRFQKIVVHPPSVDETIEILRGLKKKYEEHHNVFITEEALKAAATLSDQYVHGRFLPDKAIDLLDEAGARVRVNTMGQPTDLMKLEAEIENTKLAKEQAIGTQEYEKAAGLRDEEKKLRERLQSMKQEWENHKEEHQVPVDEEAVAQVVSLQTGIPSARLTEAESEKLLKLEDTLRRKVIGQNDAVTSICRAIRRSRTGIKDPNRPTGSFLFLGPTGVGKSLLAQQIAIEMFGGEDALIQVDMSEYMEKFAATKMMGSPPGYVGHEEGGHLTEQVRRRPYCVVLFDEIEKAHPDIMDLMLQILEQGRLTDSFGRKVDFRHAIIIMTSNLGADLIRKSGEIGFGLKSHMDYKVIQEKIEHAMKKHLKPEFINRLDESVIFRPLEKESLSEIIHLEINKLDSRLKNYQMALNIPDSVISFLVTKGHSPEMGARPLRRVIEQYLEDPLAELLLKESCRQEARKLRATLVENRVAFEREEEEQEAALPSPHLES</sequence>
<proteinExistence type="inferred from homology"/>
<reference key="1">
    <citation type="journal article" date="1999" name="Nat. Genet.">
        <title>Comparative genomes of Chlamydia pneumoniae and C. trachomatis.</title>
        <authorList>
            <person name="Kalman S."/>
            <person name="Mitchell W.P."/>
            <person name="Marathe R."/>
            <person name="Lammel C.J."/>
            <person name="Fan J."/>
            <person name="Hyman R.W."/>
            <person name="Olinger L."/>
            <person name="Grimwood J."/>
            <person name="Davis R.W."/>
            <person name="Stephens R.S."/>
        </authorList>
    </citation>
    <scope>NUCLEOTIDE SEQUENCE [LARGE SCALE GENOMIC DNA]</scope>
    <source>
        <strain>CWL029</strain>
    </source>
</reference>
<reference key="2">
    <citation type="journal article" date="2000" name="Nucleic Acids Res.">
        <title>Genome sequences of Chlamydia trachomatis MoPn and Chlamydia pneumoniae AR39.</title>
        <authorList>
            <person name="Read T.D."/>
            <person name="Brunham R.C."/>
            <person name="Shen C."/>
            <person name="Gill S.R."/>
            <person name="Heidelberg J.F."/>
            <person name="White O."/>
            <person name="Hickey E.K."/>
            <person name="Peterson J.D."/>
            <person name="Utterback T.R."/>
            <person name="Berry K.J."/>
            <person name="Bass S."/>
            <person name="Linher K.D."/>
            <person name="Weidman J.F."/>
            <person name="Khouri H.M."/>
            <person name="Craven B."/>
            <person name="Bowman C."/>
            <person name="Dodson R.J."/>
            <person name="Gwinn M.L."/>
            <person name="Nelson W.C."/>
            <person name="DeBoy R.T."/>
            <person name="Kolonay J.F."/>
            <person name="McClarty G."/>
            <person name="Salzberg S.L."/>
            <person name="Eisen J.A."/>
            <person name="Fraser C.M."/>
        </authorList>
    </citation>
    <scope>NUCLEOTIDE SEQUENCE [LARGE SCALE GENOMIC DNA]</scope>
    <source>
        <strain>AR39</strain>
    </source>
</reference>
<reference key="3">
    <citation type="journal article" date="2000" name="Nucleic Acids Res.">
        <title>Comparison of whole genome sequences of Chlamydia pneumoniae J138 from Japan and CWL029 from USA.</title>
        <authorList>
            <person name="Shirai M."/>
            <person name="Hirakawa H."/>
            <person name="Kimoto M."/>
            <person name="Tabuchi M."/>
            <person name="Kishi F."/>
            <person name="Ouchi K."/>
            <person name="Shiba T."/>
            <person name="Ishii K."/>
            <person name="Hattori M."/>
            <person name="Kuhara S."/>
            <person name="Nakazawa T."/>
        </authorList>
    </citation>
    <scope>NUCLEOTIDE SEQUENCE [LARGE SCALE GENOMIC DNA]</scope>
    <source>
        <strain>J138</strain>
    </source>
</reference>
<reference key="4">
    <citation type="submission" date="2002-05" db="EMBL/GenBank/DDBJ databases">
        <title>The genome sequence of Chlamydia pneumoniae TW183 and comparison with other Chlamydia strains based on whole genome sequence analysis.</title>
        <authorList>
            <person name="Geng M.M."/>
            <person name="Schuhmacher A."/>
            <person name="Muehldorfer I."/>
            <person name="Bensch K.W."/>
            <person name="Schaefer K.P."/>
            <person name="Schneider S."/>
            <person name="Pohl T."/>
            <person name="Essig A."/>
            <person name="Marre R."/>
            <person name="Melchers K."/>
        </authorList>
    </citation>
    <scope>NUCLEOTIDE SEQUENCE [LARGE SCALE GENOMIC DNA]</scope>
    <source>
        <strain>TW-183</strain>
    </source>
</reference>
<dbReference type="EMBL" id="AE001363">
    <property type="protein sequence ID" value="AAD18581.1"/>
    <property type="molecule type" value="Genomic_DNA"/>
</dbReference>
<dbReference type="EMBL" id="AE002161">
    <property type="protein sequence ID" value="AAF38172.1"/>
    <property type="molecule type" value="Genomic_DNA"/>
</dbReference>
<dbReference type="EMBL" id="BA000008">
    <property type="protein sequence ID" value="BAA98645.1"/>
    <property type="molecule type" value="Genomic_DNA"/>
</dbReference>
<dbReference type="EMBL" id="AE009440">
    <property type="protein sequence ID" value="AAP98384.1"/>
    <property type="molecule type" value="Genomic_DNA"/>
</dbReference>
<dbReference type="PIR" id="C86545">
    <property type="entry name" value="C86545"/>
</dbReference>
<dbReference type="PIR" id="G72079">
    <property type="entry name" value="G72079"/>
</dbReference>
<dbReference type="PIR" id="G81590">
    <property type="entry name" value="G81590"/>
</dbReference>
<dbReference type="RefSeq" id="NP_224637.1">
    <property type="nucleotide sequence ID" value="NC_000922.1"/>
</dbReference>
<dbReference type="RefSeq" id="WP_010883080.1">
    <property type="nucleotide sequence ID" value="NZ_LN847257.1"/>
</dbReference>
<dbReference type="RefSeq" id="WP_010892034.1">
    <property type="nucleotide sequence ID" value="NZ_LN847221.1"/>
</dbReference>
<dbReference type="SMR" id="Q9Z8A6"/>
<dbReference type="STRING" id="406984.CPK_ORF00950"/>
<dbReference type="GeneID" id="45050484"/>
<dbReference type="KEGG" id="cpa:CP_0316"/>
<dbReference type="KEGG" id="cpj:clpC"/>
<dbReference type="KEGG" id="cpn:CPn_0437"/>
<dbReference type="KEGG" id="cpt:CpB0454"/>
<dbReference type="PATRIC" id="fig|115713.3.peg.484"/>
<dbReference type="eggNOG" id="COG0542">
    <property type="taxonomic scope" value="Bacteria"/>
</dbReference>
<dbReference type="HOGENOM" id="CLU_005070_4_2_0"/>
<dbReference type="OrthoDB" id="9803641at2"/>
<dbReference type="Proteomes" id="UP000000583">
    <property type="component" value="Chromosome"/>
</dbReference>
<dbReference type="Proteomes" id="UP000000801">
    <property type="component" value="Chromosome"/>
</dbReference>
<dbReference type="GO" id="GO:0005737">
    <property type="term" value="C:cytoplasm"/>
    <property type="evidence" value="ECO:0007669"/>
    <property type="project" value="TreeGrafter"/>
</dbReference>
<dbReference type="GO" id="GO:0005524">
    <property type="term" value="F:ATP binding"/>
    <property type="evidence" value="ECO:0007669"/>
    <property type="project" value="UniProtKB-KW"/>
</dbReference>
<dbReference type="GO" id="GO:0016887">
    <property type="term" value="F:ATP hydrolysis activity"/>
    <property type="evidence" value="ECO:0007669"/>
    <property type="project" value="InterPro"/>
</dbReference>
<dbReference type="GO" id="GO:0034605">
    <property type="term" value="P:cellular response to heat"/>
    <property type="evidence" value="ECO:0007669"/>
    <property type="project" value="TreeGrafter"/>
</dbReference>
<dbReference type="CDD" id="cd00009">
    <property type="entry name" value="AAA"/>
    <property type="match status" value="1"/>
</dbReference>
<dbReference type="CDD" id="cd19499">
    <property type="entry name" value="RecA-like_ClpB_Hsp104-like"/>
    <property type="match status" value="1"/>
</dbReference>
<dbReference type="FunFam" id="3.40.50.300:FF:000025">
    <property type="entry name" value="ATP-dependent Clp protease subunit"/>
    <property type="match status" value="1"/>
</dbReference>
<dbReference type="FunFam" id="3.40.50.300:FF:000010">
    <property type="entry name" value="Chaperone clpB 1, putative"/>
    <property type="match status" value="1"/>
</dbReference>
<dbReference type="Gene3D" id="1.10.8.60">
    <property type="match status" value="2"/>
</dbReference>
<dbReference type="Gene3D" id="1.10.1780.10">
    <property type="entry name" value="Clp, N-terminal domain"/>
    <property type="match status" value="1"/>
</dbReference>
<dbReference type="Gene3D" id="3.40.50.300">
    <property type="entry name" value="P-loop containing nucleotide triphosphate hydrolases"/>
    <property type="match status" value="2"/>
</dbReference>
<dbReference type="Gene3D" id="4.10.860.10">
    <property type="entry name" value="UVR domain"/>
    <property type="match status" value="1"/>
</dbReference>
<dbReference type="InterPro" id="IPR003593">
    <property type="entry name" value="AAA+_ATPase"/>
</dbReference>
<dbReference type="InterPro" id="IPR003959">
    <property type="entry name" value="ATPase_AAA_core"/>
</dbReference>
<dbReference type="InterPro" id="IPR019489">
    <property type="entry name" value="Clp_ATPase_C"/>
</dbReference>
<dbReference type="InterPro" id="IPR036628">
    <property type="entry name" value="Clp_N_dom_sf"/>
</dbReference>
<dbReference type="InterPro" id="IPR004176">
    <property type="entry name" value="Clp_R_dom"/>
</dbReference>
<dbReference type="InterPro" id="IPR001270">
    <property type="entry name" value="ClpA/B"/>
</dbReference>
<dbReference type="InterPro" id="IPR018368">
    <property type="entry name" value="ClpA/B_CS1"/>
</dbReference>
<dbReference type="InterPro" id="IPR041546">
    <property type="entry name" value="ClpA/ClpB_AAA_lid"/>
</dbReference>
<dbReference type="InterPro" id="IPR050130">
    <property type="entry name" value="ClpA_ClpB"/>
</dbReference>
<dbReference type="InterPro" id="IPR027417">
    <property type="entry name" value="P-loop_NTPase"/>
</dbReference>
<dbReference type="InterPro" id="IPR001943">
    <property type="entry name" value="UVR_dom"/>
</dbReference>
<dbReference type="PANTHER" id="PTHR11638">
    <property type="entry name" value="ATP-DEPENDENT CLP PROTEASE"/>
    <property type="match status" value="1"/>
</dbReference>
<dbReference type="PANTHER" id="PTHR11638:SF18">
    <property type="entry name" value="HEAT SHOCK PROTEIN 104"/>
    <property type="match status" value="1"/>
</dbReference>
<dbReference type="Pfam" id="PF00004">
    <property type="entry name" value="AAA"/>
    <property type="match status" value="1"/>
</dbReference>
<dbReference type="Pfam" id="PF07724">
    <property type="entry name" value="AAA_2"/>
    <property type="match status" value="1"/>
</dbReference>
<dbReference type="Pfam" id="PF17871">
    <property type="entry name" value="AAA_lid_9"/>
    <property type="match status" value="1"/>
</dbReference>
<dbReference type="Pfam" id="PF02861">
    <property type="entry name" value="Clp_N"/>
    <property type="match status" value="2"/>
</dbReference>
<dbReference type="Pfam" id="PF10431">
    <property type="entry name" value="ClpB_D2-small"/>
    <property type="match status" value="1"/>
</dbReference>
<dbReference type="PRINTS" id="PR00300">
    <property type="entry name" value="CLPPROTEASEA"/>
</dbReference>
<dbReference type="SMART" id="SM00382">
    <property type="entry name" value="AAA"/>
    <property type="match status" value="2"/>
</dbReference>
<dbReference type="SMART" id="SM01086">
    <property type="entry name" value="ClpB_D2-small"/>
    <property type="match status" value="1"/>
</dbReference>
<dbReference type="SUPFAM" id="SSF81923">
    <property type="entry name" value="Double Clp-N motif"/>
    <property type="match status" value="1"/>
</dbReference>
<dbReference type="SUPFAM" id="SSF52540">
    <property type="entry name" value="P-loop containing nucleoside triphosphate hydrolases"/>
    <property type="match status" value="2"/>
</dbReference>
<dbReference type="PROSITE" id="PS51903">
    <property type="entry name" value="CLP_R"/>
    <property type="match status" value="1"/>
</dbReference>
<dbReference type="PROSITE" id="PS00870">
    <property type="entry name" value="CLPAB_1"/>
    <property type="match status" value="1"/>
</dbReference>
<dbReference type="PROSITE" id="PS50151">
    <property type="entry name" value="UVR"/>
    <property type="match status" value="1"/>
</dbReference>
<protein>
    <recommendedName>
        <fullName>Probable ATP-dependent Clp protease ATP-binding subunit</fullName>
    </recommendedName>
</protein>